<dbReference type="EMBL" id="AF201467">
    <property type="protein sequence ID" value="AAF13997.1"/>
    <property type="status" value="ALT_INIT"/>
    <property type="molecule type" value="Genomic_DNA"/>
</dbReference>
<dbReference type="EMBL" id="CP000806">
    <property type="protein sequence ID" value="ACB51920.1"/>
    <property type="status" value="ALT_INIT"/>
    <property type="molecule type" value="Genomic_DNA"/>
</dbReference>
<dbReference type="RefSeq" id="WP_009544738.1">
    <property type="nucleotide sequence ID" value="NC_010546.1"/>
</dbReference>
<dbReference type="SMR" id="Q9R6W6"/>
<dbReference type="STRING" id="43989.cce_2572"/>
<dbReference type="KEGG" id="cyt:cce_2572"/>
<dbReference type="eggNOG" id="ENOG502Z7ZP">
    <property type="taxonomic scope" value="Bacteria"/>
</dbReference>
<dbReference type="HOGENOM" id="CLU_063138_0_0_3"/>
<dbReference type="OrthoDB" id="479833at2"/>
<dbReference type="Proteomes" id="UP000001203">
    <property type="component" value="Chromosome circular"/>
</dbReference>
<dbReference type="GO" id="GO:0009654">
    <property type="term" value="C:photosystem II oxygen evolving complex"/>
    <property type="evidence" value="ECO:0007669"/>
    <property type="project" value="InterPro"/>
</dbReference>
<dbReference type="GO" id="GO:0031676">
    <property type="term" value="C:plasma membrane-derived thylakoid membrane"/>
    <property type="evidence" value="ECO:0007669"/>
    <property type="project" value="UniProtKB-SubCell"/>
</dbReference>
<dbReference type="GO" id="GO:0010242">
    <property type="term" value="F:oxygen evolving activity"/>
    <property type="evidence" value="ECO:0007669"/>
    <property type="project" value="InterPro"/>
</dbReference>
<dbReference type="GO" id="GO:0010207">
    <property type="term" value="P:photosystem II assembly"/>
    <property type="evidence" value="ECO:0007669"/>
    <property type="project" value="InterPro"/>
</dbReference>
<dbReference type="GO" id="GO:0042549">
    <property type="term" value="P:photosystem II stabilization"/>
    <property type="evidence" value="ECO:0007669"/>
    <property type="project" value="InterPro"/>
</dbReference>
<dbReference type="Gene3D" id="3.30.2050.10">
    <property type="entry name" value="photosynthetic oxygen evolving center domain"/>
    <property type="match status" value="1"/>
</dbReference>
<dbReference type="Gene3D" id="2.40.160.30">
    <property type="entry name" value="Photosystem II, cytochrome c-550 precursor"/>
    <property type="match status" value="1"/>
</dbReference>
<dbReference type="InterPro" id="IPR011250">
    <property type="entry name" value="OMP/PagP_b-brl"/>
</dbReference>
<dbReference type="InterPro" id="IPR002628">
    <property type="entry name" value="PsbO"/>
</dbReference>
<dbReference type="PANTHER" id="PTHR34058">
    <property type="entry name" value="OXYGEN-EVOLVING ENHANCER PROTEIN 1-2, CHLOROPLASTIC"/>
    <property type="match status" value="1"/>
</dbReference>
<dbReference type="Pfam" id="PF01716">
    <property type="entry name" value="MSP"/>
    <property type="match status" value="1"/>
</dbReference>
<dbReference type="SUPFAM" id="SSF56925">
    <property type="entry name" value="OMPA-like"/>
    <property type="match status" value="1"/>
</dbReference>
<comment type="function">
    <text evidence="1">One of the extrinsic, lumenal subunits of photosystem II (PSII), which stabilize and protect the oxygen-evolving complex. PSII is a light-driven water plastoquinone oxidoreductase, using light energy to abstract electrons from H(2)O, generating a proton gradient subsequently used for ATP formation. Required for dimerization of PSII and for binding of PsbQ to PSII.</text>
</comment>
<comment type="subunit">
    <text evidence="1">PSII is composed of 1 copy each of membrane proteins PsbA, PsbB, PsbC, PsbD, PsbE, PsbF, PsbH, PsbI, PsbJ, PsbK, PsbL, PsbM, PsbT, PsbX, PsbY, PsbZ, Psb30/Ycf12, peripheral proteins PsbO, CyanoQ (PsbQ), PsbU, PsbV and a large number of cofactors. It forms dimeric complexes.</text>
</comment>
<comment type="subcellular location">
    <subcellularLocation>
        <location evidence="1">Cellular thylakoid membrane</location>
        <topology evidence="1">Peripheral membrane protein</topology>
        <orientation evidence="1">Lumenal side</orientation>
    </subcellularLocation>
</comment>
<comment type="similarity">
    <text evidence="4">Belongs to the PsbO family.</text>
</comment>
<comment type="sequence caution" evidence="4">
    <conflict type="erroneous initiation">
        <sequence resource="EMBL-CDS" id="AAF13997"/>
    </conflict>
    <text>Extended N-terminus.</text>
</comment>
<comment type="sequence caution" evidence="4">
    <conflict type="erroneous initiation">
        <sequence resource="EMBL-CDS" id="ACB51920"/>
    </conflict>
    <text>Extended N-terminus.</text>
</comment>
<evidence type="ECO:0000250" key="1">
    <source>
        <dbReference type="UniProtKB" id="P10549"/>
    </source>
</evidence>
<evidence type="ECO:0000255" key="2"/>
<evidence type="ECO:0000303" key="3">
    <source ref="1"/>
</evidence>
<evidence type="ECO:0000305" key="4"/>
<reference key="1">
    <citation type="submission" date="1999-11" db="EMBL/GenBank/DDBJ databases">
        <title>Regulation of PSII extrinsic proteins and O2-evolution in the unicellular, diazatrophic cyanobacterium Cyanothece sp. ATCC 51142.</title>
        <authorList>
            <person name="Tucker D.L."/>
            <person name="Hirsh K.R."/>
            <person name="Sherman L.A."/>
        </authorList>
    </citation>
    <scope>NUCLEOTIDE SEQUENCE [GENOMIC DNA]</scope>
</reference>
<reference key="2">
    <citation type="journal article" date="2008" name="Proc. Natl. Acad. Sci. U.S.A.">
        <title>The genome of Cyanothece 51142, a unicellular diazotrophic cyanobacterium important in the marine nitrogen cycle.</title>
        <authorList>
            <person name="Welsh E.A."/>
            <person name="Liberton M."/>
            <person name="Stoeckel J."/>
            <person name="Loh T."/>
            <person name="Elvitigala T."/>
            <person name="Wang C."/>
            <person name="Wollam A."/>
            <person name="Fulton R.S."/>
            <person name="Clifton S.W."/>
            <person name="Jacobs J.M."/>
            <person name="Aurora R."/>
            <person name="Ghosh B.K."/>
            <person name="Sherman L.A."/>
            <person name="Smith R.D."/>
            <person name="Wilson R.K."/>
            <person name="Pakrasi H.B."/>
        </authorList>
    </citation>
    <scope>NUCLEOTIDE SEQUENCE [LARGE SCALE GENOMIC DNA]</scope>
    <source>
        <strain>ATCC 51142 / BH68</strain>
    </source>
</reference>
<accession>Q9R6W6</accession>
<accession>B1WSD4</accession>
<organism>
    <name type="scientific">Crocosphaera subtropica (strain ATCC 51142 / BH68)</name>
    <name type="common">Cyanothece sp. (strain ATCC 51142)</name>
    <dbReference type="NCBI Taxonomy" id="43989"/>
    <lineage>
        <taxon>Bacteria</taxon>
        <taxon>Bacillati</taxon>
        <taxon>Cyanobacteriota</taxon>
        <taxon>Cyanophyceae</taxon>
        <taxon>Oscillatoriophycideae</taxon>
        <taxon>Chroococcales</taxon>
        <taxon>Aphanothecaceae</taxon>
        <taxon>Crocosphaera</taxon>
        <taxon>Crocosphaera subtropica</taxon>
    </lineage>
</organism>
<name>PSBO_CROS5</name>
<feature type="signal peptide" evidence="2">
    <location>
        <begin position="1"/>
        <end position="28"/>
    </location>
</feature>
<feature type="chain" id="PRO_0000029566" description="Photosystem II extrinsic protein O">
    <location>
        <begin position="29"/>
        <end position="275"/>
    </location>
</feature>
<keyword id="KW-0464">Manganese</keyword>
<keyword id="KW-0472">Membrane</keyword>
<keyword id="KW-0602">Photosynthesis</keyword>
<keyword id="KW-0604">Photosystem II</keyword>
<keyword id="KW-1185">Reference proteome</keyword>
<keyword id="KW-0732">Signal</keyword>
<keyword id="KW-0793">Thylakoid</keyword>
<sequence>MRFRTLLIAFLALCLGLITACSEGPANAVNPQDLTYDEILNTGLANKCPQISEFTRGSIPIEPGQTYFVDDLCLEPQEYFVKEEPVNKRQEAEYVPGKLLTRYTTSLEQISGKITVDEDGVVTFYEEGGIDFQPVTVQLPGGEQVPFFFTIKNLVGKTEPGFSSINSSIDFEGDFRVPSYRGATFLDPKGRGLATGYDNAVALPATADKEDYANVKQTPIGKGSISLQVTKVDQATGEIAGVFDSEQPSDTDLGAKEPVEVKIRGIFYARVTPEA</sequence>
<proteinExistence type="inferred from homology"/>
<protein>
    <recommendedName>
        <fullName>Photosystem II extrinsic protein O</fullName>
        <shortName>PsbO</shortName>
    </recommendedName>
    <alternativeName>
        <fullName evidence="3">Photosystem II manganese-stabilizing polypeptide</fullName>
        <shortName evidence="3">MSP</shortName>
    </alternativeName>
</protein>
<gene>
    <name evidence="3" type="primary">psbO</name>
    <name type="ordered locus">cce_2572</name>
</gene>